<sequence length="563" mass="64052">MSFQLDQSTSVIKTAPPGRLEFKNEPIDIASSNIQDLAKMQTLDGYYQQTSLQLPQSQQYHRMYENVYNNQQILYAQTQNFQYPSTLLTNGSLAQTEWRGQQMDTSAYSNTGYSRSSTSQQPQYTQQVTENERIVYKPVDMPSPVDSGIGGDISILNPKEEFFTSADGGSMLERSSERTLSHRDSPLVIPKLYNNLGFQYVLEAPISTSVRRDDDRMTYVNKGQFYTVSLEYTPDLNKCLKSQTVKSQLMVVFREDKTYEEEIKTWQSWHARQHVSKQRILEIDSKNSSGMIGQIEEIGNNAVQFYWNPSDPSGVRISIAVQCLSTDFSTQKGVKGLPLHVQIDTYDGENDKVPFHRGYCQIKVFCDKGAERKLRDEDKRAQKRKVQEYTAGALPGGRKKSDGEYHDQCERSEFYHMRELDKPAALFIAPEEFEPRYVDSTSLSFDMSEIEPIPTKRPRTSERIMLYVRKRDEQIYQPLHVVPASLSGLALAIANKFGADPDKMSGVYKRCAKGITVKVDDEMLRLYCNEDTFIIDVEHATDGSTAATLIEVAPTNPNSYSNS</sequence>
<proteinExistence type="evidence at transcript level"/>
<comment type="function">
    <text evidence="4 5 6">Probable transcription factor (PubMed:12888489, PubMed:36688410). Binds a motif with the core sequence 5'-C[ACT][TG]G-3' in regulatory elements of target genes (PubMed:12888489, PubMed:36688410). Many putative target genes show oscillating expression levels, perhaps as a result of rhythmic variation in accumulation of grh-1 (PubMed:36688410). Plays a role in proper cuticle formation and/or barrier function and is required repetitively during development, for successful completion of each molt (PubMed:36688410). Involved in modulating lifespan (PubMed:35013237). Plays a role in defense response to bacteria (PubMed:35013237). May act upstream of the p38 MAP kinase / pmk-1 pathway (PubMed:35013237). May act downstream of the insulin/IGF-1 receptor signaling (IIS) pathway (PubMed:35013237).</text>
</comment>
<comment type="subcellular location">
    <subcellularLocation>
        <location evidence="7">Nucleus</location>
    </subcellularLocation>
</comment>
<comment type="developmental stage">
    <text evidence="4 6">Earliest expression is in elongating embryos (PubMed:36688410). Expressed in embryos, larvae and adults (PubMed:12888489). Expressed in larvae in various cell types, including seam cells, vulva precursor cells, non-seam hypodermal cells, pharyngeal cells, and head neurons (PubMed:36688410). Expressed rhythmically, reaching peak levels just prior to each molt (PubMed:36688410). Expression diminishes, or is absent, in some tissues in adults (PubMed:36688410).</text>
</comment>
<comment type="disruption phenotype">
    <text evidence="4 5 6">RNAi-mediated or conditional knockdown result in defective cuticle formation (PubMed:12888489, PubMed:36688410). RNAi-mediated knockdown in L4 stage larvae has no effect, but upon reaching adulthood, over 95% of the embryos produced by these animals arrest and fail to hatch (PubMed:12888489). Development arrests at the three-fold stage, showing abnormal constrictions or puckering in the external cuticle and approximately 8% of embryos exhibit ruptures in their cuticles resulting in the extrusion of cells (PubMed:12888489). RNAi-mediated knockdown significantly shortens lifespan (PubMed:35013237). Conditional knockdown in L1 larvae causes fully penetrant lethality with no viable larvae left by 38 hours (PubMed:36688410). Conditional knockdown causes abnormal molting/ecdysis, including extending the duration of molts (PubMed:36688410).</text>
</comment>
<comment type="similarity">
    <text evidence="7">Belongs to the grh/CP2 family. Grainyhead subfamily.</text>
</comment>
<gene>
    <name evidence="10" type="primary">grh-1</name>
    <name evidence="10" type="ORF">Y48G8AR.1</name>
</gene>
<feature type="chain" id="PRO_0000451597" description="Grainyhead-like protein 1 homolog">
    <location>
        <begin position="1"/>
        <end position="563"/>
    </location>
</feature>
<feature type="domain" description="Grh/CP2 DB" evidence="2">
    <location>
        <begin position="194"/>
        <end position="428"/>
    </location>
</feature>
<feature type="region of interest" description="Interaction with DNA" evidence="1">
    <location>
        <begin position="326"/>
        <end position="335"/>
    </location>
</feature>
<feature type="region of interest" description="Interaction with DNA" evidence="1">
    <location>
        <begin position="372"/>
        <end position="375"/>
    </location>
</feature>
<feature type="region of interest" description="Disordered" evidence="3">
    <location>
        <begin position="377"/>
        <end position="405"/>
    </location>
</feature>
<name>GRH1_CAEEL</name>
<accession>G5EDF0</accession>
<dbReference type="EMBL" id="AY323527">
    <property type="protein sequence ID" value="AAP78770.1"/>
    <property type="molecule type" value="mRNA"/>
</dbReference>
<dbReference type="EMBL" id="BX284601">
    <property type="protein sequence ID" value="CCD72954.1"/>
    <property type="molecule type" value="Genomic_DNA"/>
</dbReference>
<dbReference type="RefSeq" id="NP_490837.2">
    <property type="nucleotide sequence ID" value="NM_058436.6"/>
</dbReference>
<dbReference type="SMR" id="G5EDF0"/>
<dbReference type="FunCoup" id="G5EDF0">
    <property type="interactions" value="188"/>
</dbReference>
<dbReference type="STRING" id="6239.Y48G8AR.1a.1"/>
<dbReference type="PaxDb" id="6239-Y48G8AR.1"/>
<dbReference type="PeptideAtlas" id="G5EDF0"/>
<dbReference type="EnsemblMetazoa" id="Y48G8AR.1a.1">
    <property type="protein sequence ID" value="Y48G8AR.1a.1"/>
    <property type="gene ID" value="WBGene00001707"/>
</dbReference>
<dbReference type="GeneID" id="190048"/>
<dbReference type="KEGG" id="cel:CELE_Y48G8AR.1"/>
<dbReference type="AGR" id="WB:WBGene00001707"/>
<dbReference type="CTD" id="190048"/>
<dbReference type="WormBase" id="Y48G8AR.1a">
    <property type="protein sequence ID" value="CE34614"/>
    <property type="gene ID" value="WBGene00001707"/>
    <property type="gene designation" value="grh-1"/>
</dbReference>
<dbReference type="eggNOG" id="KOG4091">
    <property type="taxonomic scope" value="Eukaryota"/>
</dbReference>
<dbReference type="HOGENOM" id="CLU_005625_3_1_1"/>
<dbReference type="InParanoid" id="G5EDF0"/>
<dbReference type="OMA" id="GEYHEQC"/>
<dbReference type="OrthoDB" id="7680836at2759"/>
<dbReference type="PhylomeDB" id="G5EDF0"/>
<dbReference type="PRO" id="PR:G5EDF0"/>
<dbReference type="Proteomes" id="UP000001940">
    <property type="component" value="Chromosome I"/>
</dbReference>
<dbReference type="ExpressionAtlas" id="G5EDF0">
    <property type="expression patterns" value="baseline and differential"/>
</dbReference>
<dbReference type="GO" id="GO:0000785">
    <property type="term" value="C:chromatin"/>
    <property type="evidence" value="ECO:0000314"/>
    <property type="project" value="UniProtKB"/>
</dbReference>
<dbReference type="GO" id="GO:0005634">
    <property type="term" value="C:nucleus"/>
    <property type="evidence" value="ECO:0000314"/>
    <property type="project" value="UniProtKB"/>
</dbReference>
<dbReference type="GO" id="GO:0001228">
    <property type="term" value="F:DNA-binding transcription activator activity, RNA polymerase II-specific"/>
    <property type="evidence" value="ECO:0000318"/>
    <property type="project" value="GO_Central"/>
</dbReference>
<dbReference type="GO" id="GO:0000978">
    <property type="term" value="F:RNA polymerase II cis-regulatory region sequence-specific DNA binding"/>
    <property type="evidence" value="ECO:0000318"/>
    <property type="project" value="GO_Central"/>
</dbReference>
<dbReference type="GO" id="GO:0043565">
    <property type="term" value="F:sequence-specific DNA binding"/>
    <property type="evidence" value="ECO:0000314"/>
    <property type="project" value="UniProtKB"/>
</dbReference>
<dbReference type="GO" id="GO:1990837">
    <property type="term" value="F:sequence-specific double-stranded DNA binding"/>
    <property type="evidence" value="ECO:0000314"/>
    <property type="project" value="UniProtKB"/>
</dbReference>
<dbReference type="GO" id="GO:0042742">
    <property type="term" value="P:defense response to bacterium"/>
    <property type="evidence" value="ECO:0000315"/>
    <property type="project" value="UniProtKB"/>
</dbReference>
<dbReference type="GO" id="GO:0008340">
    <property type="term" value="P:determination of adult lifespan"/>
    <property type="evidence" value="ECO:0000315"/>
    <property type="project" value="UniProtKB"/>
</dbReference>
<dbReference type="GO" id="GO:0042395">
    <property type="term" value="P:ecdysis, collagen and cuticulin-based cuticle"/>
    <property type="evidence" value="ECO:0000315"/>
    <property type="project" value="UniProtKB"/>
</dbReference>
<dbReference type="GO" id="GO:0018996">
    <property type="term" value="P:molting cycle, collagen and cuticulin-based cuticle"/>
    <property type="evidence" value="ECO:0000315"/>
    <property type="project" value="UniProtKB"/>
</dbReference>
<dbReference type="GO" id="GO:0006357">
    <property type="term" value="P:regulation of transcription by RNA polymerase II"/>
    <property type="evidence" value="ECO:0000318"/>
    <property type="project" value="GO_Central"/>
</dbReference>
<dbReference type="InterPro" id="IPR007604">
    <property type="entry name" value="CP2"/>
</dbReference>
<dbReference type="InterPro" id="IPR040167">
    <property type="entry name" value="TF_CP2-like"/>
</dbReference>
<dbReference type="PANTHER" id="PTHR11037:SF20">
    <property type="entry name" value="PROTEIN GRAINYHEAD"/>
    <property type="match status" value="1"/>
</dbReference>
<dbReference type="PANTHER" id="PTHR11037">
    <property type="entry name" value="TRANSCRIPTION FACTOR CP2"/>
    <property type="match status" value="1"/>
</dbReference>
<dbReference type="Pfam" id="PF04516">
    <property type="entry name" value="CP2"/>
    <property type="match status" value="1"/>
</dbReference>
<dbReference type="Pfam" id="PF25416">
    <property type="entry name" value="GRHL1_C"/>
    <property type="match status" value="1"/>
</dbReference>
<dbReference type="PROSITE" id="PS51968">
    <property type="entry name" value="GRH_CP2_DB"/>
    <property type="match status" value="1"/>
</dbReference>
<organism evidence="9">
    <name type="scientific">Caenorhabditis elegans</name>
    <dbReference type="NCBI Taxonomy" id="6239"/>
    <lineage>
        <taxon>Eukaryota</taxon>
        <taxon>Metazoa</taxon>
        <taxon>Ecdysozoa</taxon>
        <taxon>Nematoda</taxon>
        <taxon>Chromadorea</taxon>
        <taxon>Rhabditida</taxon>
        <taxon>Rhabditina</taxon>
        <taxon>Rhabditomorpha</taxon>
        <taxon>Rhabditoidea</taxon>
        <taxon>Rhabditidae</taxon>
        <taxon>Peloderinae</taxon>
        <taxon>Caenorhabditis</taxon>
    </lineage>
</organism>
<protein>
    <recommendedName>
        <fullName evidence="10">Grainyhead-like protein 1 homolog</fullName>
    </recommendedName>
</protein>
<keyword id="KW-0238">DNA-binding</keyword>
<keyword id="KW-0539">Nucleus</keyword>
<keyword id="KW-1185">Reference proteome</keyword>
<keyword id="KW-0804">Transcription</keyword>
<keyword id="KW-0805">Transcription regulation</keyword>
<evidence type="ECO:0000250" key="1">
    <source>
        <dbReference type="UniProtKB" id="Q9NZI5"/>
    </source>
</evidence>
<evidence type="ECO:0000255" key="2">
    <source>
        <dbReference type="PROSITE-ProRule" id="PRU01313"/>
    </source>
</evidence>
<evidence type="ECO:0000256" key="3">
    <source>
        <dbReference type="SAM" id="MobiDB-lite"/>
    </source>
</evidence>
<evidence type="ECO:0000269" key="4">
    <source>
    </source>
</evidence>
<evidence type="ECO:0000269" key="5">
    <source>
    </source>
</evidence>
<evidence type="ECO:0000269" key="6">
    <source>
    </source>
</evidence>
<evidence type="ECO:0000305" key="7"/>
<evidence type="ECO:0000312" key="8">
    <source>
        <dbReference type="EMBL" id="AAP78770.1"/>
    </source>
</evidence>
<evidence type="ECO:0000312" key="9">
    <source>
        <dbReference type="Proteomes" id="UP000001940"/>
    </source>
</evidence>
<evidence type="ECO:0000312" key="10">
    <source>
        <dbReference type="WormBase" id="Y48G8AR.1a"/>
    </source>
</evidence>
<reference evidence="8" key="1">
    <citation type="journal article" date="2003" name="Nucleic Acids Res.">
        <title>Functional conservation between members of an ancient duplicated transcription factor family, LSF/Grainyhead.</title>
        <authorList>
            <person name="Venkatesan K."/>
            <person name="McManus H.R."/>
            <person name="Mello C.C."/>
            <person name="Smith T.F."/>
            <person name="Hansen U."/>
        </authorList>
    </citation>
    <scope>NUCLEOTIDE SEQUENCE [MRNA]</scope>
    <scope>FUNCTION</scope>
    <scope>DEVELOPMENTAL STAGE</scope>
    <scope>DISRUPTION PHENOTYPE</scope>
</reference>
<reference evidence="9" key="2">
    <citation type="journal article" date="1998" name="Science">
        <title>Genome sequence of the nematode C. elegans: a platform for investigating biology.</title>
        <authorList>
            <consortium name="The C. elegans sequencing consortium"/>
        </authorList>
    </citation>
    <scope>NUCLEOTIDE SEQUENCE [LARGE SCALE GENOMIC DNA]</scope>
    <source>
        <strain evidence="9">Bristol N2</strain>
    </source>
</reference>
<reference key="3">
    <citation type="journal article" date="2022" name="Nat. Commun.">
        <title>Grainyhead 1 acts as a drug-inducible conserved transcriptional regulator linked to insulin signaling and lifespan.</title>
        <authorList>
            <person name="Grigolon G."/>
            <person name="Araldi E."/>
            <person name="Erni R."/>
            <person name="Wu J.Y."/>
            <person name="Thomas C."/>
            <person name="La Fortezza M."/>
            <person name="Laube B."/>
            <person name="Poehlmann D."/>
            <person name="Stoffel M."/>
            <person name="Zarse K."/>
            <person name="Carreira E.M."/>
            <person name="Ristow M."/>
            <person name="Fischer F."/>
        </authorList>
    </citation>
    <scope>FUNCTION</scope>
    <scope>DISRUPTION PHENOTYPE</scope>
</reference>
<reference key="4">
    <citation type="journal article" date="2023" name="EMBO J.">
        <title>C. elegans molting requires rhythmic accumulation of the Grainyhead/LSF transcription factor GRH-1.</title>
        <authorList>
            <person name="Meeuse M.W.M."/>
            <person name="Hauser Y.P."/>
            <person name="Nahar S."/>
            <person name="Smith A.A.T."/>
            <person name="Braun K."/>
            <person name="Azzi C."/>
            <person name="Rempfler M."/>
            <person name="Grosshans H."/>
        </authorList>
    </citation>
    <scope>FUNCTION</scope>
    <scope>DEVELOPMENTAL STAGE</scope>
    <scope>DISRUPTION PHENOTYPE</scope>
</reference>